<keyword id="KW-0687">Ribonucleoprotein</keyword>
<keyword id="KW-0689">Ribosomal protein</keyword>
<keyword id="KW-0694">RNA-binding</keyword>
<keyword id="KW-0699">rRNA-binding</keyword>
<sequence>MIQMQSILEVADNSGAKKVMCIKVLGGSHHMVAKLGDVIVVSVKDAIPGGKVKKGDVYKGLIVRTKTGVVRPDGSTIKFDQNALVLLNKQDEPIGTRVFGPVTRELRAKKYVRIMSLAEEVL</sequence>
<comment type="function">
    <text evidence="1">Binds to 23S rRNA. Forms part of two intersubunit bridges in the 70S ribosome.</text>
</comment>
<comment type="subunit">
    <text evidence="1">Part of the 50S ribosomal subunit. Forms a cluster with proteins L3 and L19. In the 70S ribosome, L14 and L19 interact and together make contacts with the 16S rRNA in bridges B5 and B8.</text>
</comment>
<comment type="similarity">
    <text evidence="1">Belongs to the universal ribosomal protein uL14 family.</text>
</comment>
<protein>
    <recommendedName>
        <fullName evidence="1">Large ribosomal subunit protein uL14</fullName>
    </recommendedName>
    <alternativeName>
        <fullName evidence="2">50S ribosomal protein L14</fullName>
    </alternativeName>
</protein>
<reference key="1">
    <citation type="journal article" date="2008" name="Infect. Immun.">
        <title>Genomic comparison of virulent Rickettsia rickettsii Sheila Smith and avirulent Rickettsia rickettsii Iowa.</title>
        <authorList>
            <person name="Ellison D.W."/>
            <person name="Clark T.R."/>
            <person name="Sturdevant D.E."/>
            <person name="Virtaneva K."/>
            <person name="Porcella S.F."/>
            <person name="Hackstadt T."/>
        </authorList>
    </citation>
    <scope>NUCLEOTIDE SEQUENCE [LARGE SCALE GENOMIC DNA]</scope>
    <source>
        <strain>Iowa</strain>
    </source>
</reference>
<name>RL14_RICRO</name>
<accession>B0BUQ0</accession>
<evidence type="ECO:0000255" key="1">
    <source>
        <dbReference type="HAMAP-Rule" id="MF_01367"/>
    </source>
</evidence>
<evidence type="ECO:0000305" key="2"/>
<gene>
    <name evidence="1" type="primary">rplN</name>
    <name type="ordered locus">RrIowa_1187</name>
</gene>
<proteinExistence type="inferred from homology"/>
<organism>
    <name type="scientific">Rickettsia rickettsii (strain Iowa)</name>
    <dbReference type="NCBI Taxonomy" id="452659"/>
    <lineage>
        <taxon>Bacteria</taxon>
        <taxon>Pseudomonadati</taxon>
        <taxon>Pseudomonadota</taxon>
        <taxon>Alphaproteobacteria</taxon>
        <taxon>Rickettsiales</taxon>
        <taxon>Rickettsiaceae</taxon>
        <taxon>Rickettsieae</taxon>
        <taxon>Rickettsia</taxon>
        <taxon>spotted fever group</taxon>
    </lineage>
</organism>
<dbReference type="EMBL" id="CP000766">
    <property type="protein sequence ID" value="ABY72960.1"/>
    <property type="molecule type" value="Genomic_DNA"/>
</dbReference>
<dbReference type="RefSeq" id="WP_012151146.1">
    <property type="nucleotide sequence ID" value="NC_010263.3"/>
</dbReference>
<dbReference type="SMR" id="B0BUQ0"/>
<dbReference type="GeneID" id="79937660"/>
<dbReference type="KEGG" id="rrj:RrIowa_1187"/>
<dbReference type="eggNOG" id="COG0093">
    <property type="taxonomic scope" value="Bacteria"/>
</dbReference>
<dbReference type="HOGENOM" id="CLU_095071_2_1_5"/>
<dbReference type="Proteomes" id="UP000000796">
    <property type="component" value="Chromosome"/>
</dbReference>
<dbReference type="GO" id="GO:0022625">
    <property type="term" value="C:cytosolic large ribosomal subunit"/>
    <property type="evidence" value="ECO:0007669"/>
    <property type="project" value="TreeGrafter"/>
</dbReference>
<dbReference type="GO" id="GO:0070180">
    <property type="term" value="F:large ribosomal subunit rRNA binding"/>
    <property type="evidence" value="ECO:0007669"/>
    <property type="project" value="TreeGrafter"/>
</dbReference>
<dbReference type="GO" id="GO:0003735">
    <property type="term" value="F:structural constituent of ribosome"/>
    <property type="evidence" value="ECO:0007669"/>
    <property type="project" value="InterPro"/>
</dbReference>
<dbReference type="GO" id="GO:0006412">
    <property type="term" value="P:translation"/>
    <property type="evidence" value="ECO:0007669"/>
    <property type="project" value="UniProtKB-UniRule"/>
</dbReference>
<dbReference type="CDD" id="cd00337">
    <property type="entry name" value="Ribosomal_uL14"/>
    <property type="match status" value="1"/>
</dbReference>
<dbReference type="FunFam" id="2.40.150.20:FF:000001">
    <property type="entry name" value="50S ribosomal protein L14"/>
    <property type="match status" value="1"/>
</dbReference>
<dbReference type="Gene3D" id="2.40.150.20">
    <property type="entry name" value="Ribosomal protein L14"/>
    <property type="match status" value="1"/>
</dbReference>
<dbReference type="HAMAP" id="MF_01367">
    <property type="entry name" value="Ribosomal_uL14"/>
    <property type="match status" value="1"/>
</dbReference>
<dbReference type="InterPro" id="IPR000218">
    <property type="entry name" value="Ribosomal_uL14"/>
</dbReference>
<dbReference type="InterPro" id="IPR005745">
    <property type="entry name" value="Ribosomal_uL14_bac-type"/>
</dbReference>
<dbReference type="InterPro" id="IPR019972">
    <property type="entry name" value="Ribosomal_uL14_CS"/>
</dbReference>
<dbReference type="InterPro" id="IPR036853">
    <property type="entry name" value="Ribosomal_uL14_sf"/>
</dbReference>
<dbReference type="NCBIfam" id="TIGR01067">
    <property type="entry name" value="rplN_bact"/>
    <property type="match status" value="1"/>
</dbReference>
<dbReference type="PANTHER" id="PTHR11761">
    <property type="entry name" value="50S/60S RIBOSOMAL PROTEIN L14/L23"/>
    <property type="match status" value="1"/>
</dbReference>
<dbReference type="PANTHER" id="PTHR11761:SF3">
    <property type="entry name" value="LARGE RIBOSOMAL SUBUNIT PROTEIN UL14M"/>
    <property type="match status" value="1"/>
</dbReference>
<dbReference type="Pfam" id="PF00238">
    <property type="entry name" value="Ribosomal_L14"/>
    <property type="match status" value="1"/>
</dbReference>
<dbReference type="SMART" id="SM01374">
    <property type="entry name" value="Ribosomal_L14"/>
    <property type="match status" value="1"/>
</dbReference>
<dbReference type="SUPFAM" id="SSF50193">
    <property type="entry name" value="Ribosomal protein L14"/>
    <property type="match status" value="1"/>
</dbReference>
<dbReference type="PROSITE" id="PS00049">
    <property type="entry name" value="RIBOSOMAL_L14"/>
    <property type="match status" value="1"/>
</dbReference>
<feature type="chain" id="PRO_0000355834" description="Large ribosomal subunit protein uL14">
    <location>
        <begin position="1"/>
        <end position="122"/>
    </location>
</feature>